<evidence type="ECO:0000255" key="1">
    <source>
        <dbReference type="HAMAP-Rule" id="MF_00374"/>
    </source>
</evidence>
<evidence type="ECO:0000305" key="2"/>
<organism>
    <name type="scientific">Actinobacillus succinogenes (strain ATCC 55618 / DSM 22257 / CCUG 43843 / 130Z)</name>
    <dbReference type="NCBI Taxonomy" id="339671"/>
    <lineage>
        <taxon>Bacteria</taxon>
        <taxon>Pseudomonadati</taxon>
        <taxon>Pseudomonadota</taxon>
        <taxon>Gammaproteobacteria</taxon>
        <taxon>Pasteurellales</taxon>
        <taxon>Pasteurellaceae</taxon>
        <taxon>Actinobacillus</taxon>
    </lineage>
</organism>
<protein>
    <recommendedName>
        <fullName evidence="1">Large ribosomal subunit protein uL29</fullName>
    </recommendedName>
    <alternativeName>
        <fullName evidence="2">50S ribosomal protein L29</fullName>
    </alternativeName>
</protein>
<comment type="similarity">
    <text evidence="1">Belongs to the universal ribosomal protein uL29 family.</text>
</comment>
<accession>A6VLJ6</accession>
<proteinExistence type="inferred from homology"/>
<feature type="chain" id="PRO_1000072140" description="Large ribosomal subunit protein uL29">
    <location>
        <begin position="1"/>
        <end position="63"/>
    </location>
</feature>
<reference key="1">
    <citation type="journal article" date="2010" name="BMC Genomics">
        <title>A genomic perspective on the potential of Actinobacillus succinogenes for industrial succinate production.</title>
        <authorList>
            <person name="McKinlay J.B."/>
            <person name="Laivenieks M."/>
            <person name="Schindler B.D."/>
            <person name="McKinlay A.A."/>
            <person name="Siddaramappa S."/>
            <person name="Challacombe J.F."/>
            <person name="Lowry S.R."/>
            <person name="Clum A."/>
            <person name="Lapidus A.L."/>
            <person name="Burkhart K.B."/>
            <person name="Harkins V."/>
            <person name="Vieille C."/>
        </authorList>
    </citation>
    <scope>NUCLEOTIDE SEQUENCE [LARGE SCALE GENOMIC DNA]</scope>
    <source>
        <strain>ATCC 55618 / DSM 22257 / CCUG 43843 / 130Z</strain>
    </source>
</reference>
<keyword id="KW-1185">Reference proteome</keyword>
<keyword id="KW-0687">Ribonucleoprotein</keyword>
<keyword id="KW-0689">Ribosomal protein</keyword>
<name>RL29_ACTSZ</name>
<dbReference type="EMBL" id="CP000746">
    <property type="protein sequence ID" value="ABR73843.1"/>
    <property type="molecule type" value="Genomic_DNA"/>
</dbReference>
<dbReference type="RefSeq" id="WP_012072226.1">
    <property type="nucleotide sequence ID" value="NC_009655.1"/>
</dbReference>
<dbReference type="SMR" id="A6VLJ6"/>
<dbReference type="STRING" id="339671.Asuc_0467"/>
<dbReference type="KEGG" id="asu:Asuc_0467"/>
<dbReference type="eggNOG" id="COG0255">
    <property type="taxonomic scope" value="Bacteria"/>
</dbReference>
<dbReference type="HOGENOM" id="CLU_158491_1_2_6"/>
<dbReference type="OrthoDB" id="9815192at2"/>
<dbReference type="Proteomes" id="UP000001114">
    <property type="component" value="Chromosome"/>
</dbReference>
<dbReference type="GO" id="GO:0022625">
    <property type="term" value="C:cytosolic large ribosomal subunit"/>
    <property type="evidence" value="ECO:0007669"/>
    <property type="project" value="TreeGrafter"/>
</dbReference>
<dbReference type="GO" id="GO:0003735">
    <property type="term" value="F:structural constituent of ribosome"/>
    <property type="evidence" value="ECO:0007669"/>
    <property type="project" value="InterPro"/>
</dbReference>
<dbReference type="GO" id="GO:0006412">
    <property type="term" value="P:translation"/>
    <property type="evidence" value="ECO:0007669"/>
    <property type="project" value="UniProtKB-UniRule"/>
</dbReference>
<dbReference type="CDD" id="cd00427">
    <property type="entry name" value="Ribosomal_L29_HIP"/>
    <property type="match status" value="1"/>
</dbReference>
<dbReference type="FunFam" id="1.10.287.310:FF:000001">
    <property type="entry name" value="50S ribosomal protein L29"/>
    <property type="match status" value="1"/>
</dbReference>
<dbReference type="Gene3D" id="1.10.287.310">
    <property type="match status" value="1"/>
</dbReference>
<dbReference type="HAMAP" id="MF_00374">
    <property type="entry name" value="Ribosomal_uL29"/>
    <property type="match status" value="1"/>
</dbReference>
<dbReference type="InterPro" id="IPR050063">
    <property type="entry name" value="Ribosomal_protein_uL29"/>
</dbReference>
<dbReference type="InterPro" id="IPR001854">
    <property type="entry name" value="Ribosomal_uL29"/>
</dbReference>
<dbReference type="InterPro" id="IPR018254">
    <property type="entry name" value="Ribosomal_uL29_CS"/>
</dbReference>
<dbReference type="InterPro" id="IPR036049">
    <property type="entry name" value="Ribosomal_uL29_sf"/>
</dbReference>
<dbReference type="NCBIfam" id="TIGR00012">
    <property type="entry name" value="L29"/>
    <property type="match status" value="1"/>
</dbReference>
<dbReference type="PANTHER" id="PTHR10916">
    <property type="entry name" value="60S RIBOSOMAL PROTEIN L35/50S RIBOSOMAL PROTEIN L29"/>
    <property type="match status" value="1"/>
</dbReference>
<dbReference type="PANTHER" id="PTHR10916:SF0">
    <property type="entry name" value="LARGE RIBOSOMAL SUBUNIT PROTEIN UL29C"/>
    <property type="match status" value="1"/>
</dbReference>
<dbReference type="Pfam" id="PF00831">
    <property type="entry name" value="Ribosomal_L29"/>
    <property type="match status" value="1"/>
</dbReference>
<dbReference type="SUPFAM" id="SSF46561">
    <property type="entry name" value="Ribosomal protein L29 (L29p)"/>
    <property type="match status" value="1"/>
</dbReference>
<dbReference type="PROSITE" id="PS00579">
    <property type="entry name" value="RIBOSOMAL_L29"/>
    <property type="match status" value="1"/>
</dbReference>
<gene>
    <name evidence="1" type="primary">rpmC</name>
    <name type="ordered locus">Asuc_0467</name>
</gene>
<sequence>MKAQELRNKNVEELNAELNNLLGEQFKLRMQAATGQLQQTHQLKQVRRNIARVKTVLNQKAGE</sequence>